<dbReference type="EC" id="3.1.26.5" evidence="1"/>
<dbReference type="EMBL" id="CP001127">
    <property type="protein sequence ID" value="ACF91001.1"/>
    <property type="molecule type" value="Genomic_DNA"/>
</dbReference>
<dbReference type="RefSeq" id="WP_000239725.1">
    <property type="nucleotide sequence ID" value="NC_011094.1"/>
</dbReference>
<dbReference type="SMR" id="B4TN09"/>
<dbReference type="GeneID" id="93035306"/>
<dbReference type="KEGG" id="sew:SeSA_A4053"/>
<dbReference type="HOGENOM" id="CLU_117179_11_0_6"/>
<dbReference type="Proteomes" id="UP000001865">
    <property type="component" value="Chromosome"/>
</dbReference>
<dbReference type="GO" id="GO:0030677">
    <property type="term" value="C:ribonuclease P complex"/>
    <property type="evidence" value="ECO:0007669"/>
    <property type="project" value="TreeGrafter"/>
</dbReference>
<dbReference type="GO" id="GO:0042781">
    <property type="term" value="F:3'-tRNA processing endoribonuclease activity"/>
    <property type="evidence" value="ECO:0007669"/>
    <property type="project" value="TreeGrafter"/>
</dbReference>
<dbReference type="GO" id="GO:0004526">
    <property type="term" value="F:ribonuclease P activity"/>
    <property type="evidence" value="ECO:0007669"/>
    <property type="project" value="UniProtKB-UniRule"/>
</dbReference>
<dbReference type="GO" id="GO:0000049">
    <property type="term" value="F:tRNA binding"/>
    <property type="evidence" value="ECO:0007669"/>
    <property type="project" value="UniProtKB-UniRule"/>
</dbReference>
<dbReference type="GO" id="GO:0001682">
    <property type="term" value="P:tRNA 5'-leader removal"/>
    <property type="evidence" value="ECO:0007669"/>
    <property type="project" value="UniProtKB-UniRule"/>
</dbReference>
<dbReference type="FunFam" id="3.30.230.10:FF:000016">
    <property type="entry name" value="Ribonuclease P protein component"/>
    <property type="match status" value="1"/>
</dbReference>
<dbReference type="Gene3D" id="3.30.230.10">
    <property type="match status" value="1"/>
</dbReference>
<dbReference type="HAMAP" id="MF_00227">
    <property type="entry name" value="RNase_P"/>
    <property type="match status" value="1"/>
</dbReference>
<dbReference type="InterPro" id="IPR020568">
    <property type="entry name" value="Ribosomal_Su5_D2-typ_SF"/>
</dbReference>
<dbReference type="InterPro" id="IPR014721">
    <property type="entry name" value="Ribsml_uS5_D2-typ_fold_subgr"/>
</dbReference>
<dbReference type="InterPro" id="IPR000100">
    <property type="entry name" value="RNase_P"/>
</dbReference>
<dbReference type="InterPro" id="IPR020539">
    <property type="entry name" value="RNase_P_CS"/>
</dbReference>
<dbReference type="NCBIfam" id="TIGR00188">
    <property type="entry name" value="rnpA"/>
    <property type="match status" value="1"/>
</dbReference>
<dbReference type="PANTHER" id="PTHR33992">
    <property type="entry name" value="RIBONUCLEASE P PROTEIN COMPONENT"/>
    <property type="match status" value="1"/>
</dbReference>
<dbReference type="PANTHER" id="PTHR33992:SF1">
    <property type="entry name" value="RIBONUCLEASE P PROTEIN COMPONENT"/>
    <property type="match status" value="1"/>
</dbReference>
<dbReference type="Pfam" id="PF00825">
    <property type="entry name" value="Ribonuclease_P"/>
    <property type="match status" value="1"/>
</dbReference>
<dbReference type="SUPFAM" id="SSF54211">
    <property type="entry name" value="Ribosomal protein S5 domain 2-like"/>
    <property type="match status" value="1"/>
</dbReference>
<dbReference type="PROSITE" id="PS00648">
    <property type="entry name" value="RIBONUCLEASE_P"/>
    <property type="match status" value="1"/>
</dbReference>
<reference key="1">
    <citation type="journal article" date="2011" name="J. Bacteriol.">
        <title>Comparative genomics of 28 Salmonella enterica isolates: evidence for CRISPR-mediated adaptive sublineage evolution.</title>
        <authorList>
            <person name="Fricke W.F."/>
            <person name="Mammel M.K."/>
            <person name="McDermott P.F."/>
            <person name="Tartera C."/>
            <person name="White D.G."/>
            <person name="Leclerc J.E."/>
            <person name="Ravel J."/>
            <person name="Cebula T.A."/>
        </authorList>
    </citation>
    <scope>NUCLEOTIDE SEQUENCE [LARGE SCALE GENOMIC DNA]</scope>
    <source>
        <strain>CVM19633</strain>
    </source>
</reference>
<comment type="function">
    <text evidence="1">RNaseP catalyzes the removal of the 5'-leader sequence from pre-tRNA to produce the mature 5'-terminus. It can also cleave other RNA substrates such as 4.5S RNA. The protein component plays an auxiliary but essential role in vivo by binding to the 5'-leader sequence and broadening the substrate specificity of the ribozyme.</text>
</comment>
<comment type="catalytic activity">
    <reaction evidence="1">
        <text>Endonucleolytic cleavage of RNA, removing 5'-extranucleotides from tRNA precursor.</text>
        <dbReference type="EC" id="3.1.26.5"/>
    </reaction>
</comment>
<comment type="subunit">
    <text evidence="1">Consists of a catalytic RNA component (M1 or rnpB) and a protein subunit.</text>
</comment>
<comment type="similarity">
    <text evidence="1">Belongs to the RnpA family.</text>
</comment>
<accession>B4TN09</accession>
<keyword id="KW-0255">Endonuclease</keyword>
<keyword id="KW-0378">Hydrolase</keyword>
<keyword id="KW-0540">Nuclease</keyword>
<keyword id="KW-0694">RNA-binding</keyword>
<keyword id="KW-0819">tRNA processing</keyword>
<sequence length="119" mass="13782">MVKLAFPRELRLLTPAHFTFVFQQPQRAGTPQITILGRLNSLGHPRIGLTVAKKNVRRAHERNRIKRLTRESFRLRQHELPAMDFVVVAKKGVADLDNRALSEALEKLWRRHCRLARGS</sequence>
<proteinExistence type="inferred from homology"/>
<name>RNPA_SALSV</name>
<gene>
    <name evidence="1" type="primary">rnpA</name>
    <name type="ordered locus">SeSA_A4053</name>
</gene>
<organism>
    <name type="scientific">Salmonella schwarzengrund (strain CVM19633)</name>
    <dbReference type="NCBI Taxonomy" id="439843"/>
    <lineage>
        <taxon>Bacteria</taxon>
        <taxon>Pseudomonadati</taxon>
        <taxon>Pseudomonadota</taxon>
        <taxon>Gammaproteobacteria</taxon>
        <taxon>Enterobacterales</taxon>
        <taxon>Enterobacteriaceae</taxon>
        <taxon>Salmonella</taxon>
    </lineage>
</organism>
<protein>
    <recommendedName>
        <fullName evidence="1">Ribonuclease P protein component</fullName>
        <shortName evidence="1">RNase P protein</shortName>
        <shortName evidence="1">RNaseP protein</shortName>
        <ecNumber evidence="1">3.1.26.5</ecNumber>
    </recommendedName>
    <alternativeName>
        <fullName evidence="1">Protein C5</fullName>
    </alternativeName>
</protein>
<evidence type="ECO:0000255" key="1">
    <source>
        <dbReference type="HAMAP-Rule" id="MF_00227"/>
    </source>
</evidence>
<feature type="chain" id="PRO_1000100392" description="Ribonuclease P protein component">
    <location>
        <begin position="1"/>
        <end position="119"/>
    </location>
</feature>